<accession>A0A0C4DH41</accession>
<comment type="function">
    <text evidence="5 6 7 8">V region of the variable domain of immunoglobulin heavy chains that participates in the antigen recognition (PubMed:24600447). Immunoglobulins, also known as antibodies, are membrane-bound or secreted glycoproteins produced by B lymphocytes. In the recognition phase of humoral immunity, the membrane-bound immunoglobulins serve as receptors which, upon binding of a specific antigen, trigger the clonal expansion and differentiation of B lymphocytes into immunoglobulins-secreting plasma cells. Secreted immunoglobulins mediate the effector phase of humoral immunity, which results in the elimination of bound antigens (PubMed:20176268, PubMed:22158414). The antigen binding site is formed by the variable domain of one heavy chain, together with that of its associated light chain. Thus, each immunoglobulin has two antigen binding sites with remarkable affinity for a particular antigen. The variable domains are assembled by a process called V-(D)-J rearrangement and can then be subjected to somatic hypermutations which, after exposure to antigen and selection, allow affinity maturation for a particular antigen (PubMed:17576170, PubMed:20176268).</text>
</comment>
<comment type="subunit">
    <text evidence="6">Immunoglobulins are composed of two identical heavy chains and two identical light chains; disulfide-linked.</text>
</comment>
<comment type="subcellular location">
    <subcellularLocation>
        <location evidence="6 7">Secreted</location>
    </subcellularLocation>
    <subcellularLocation>
        <location evidence="6 7">Cell membrane</location>
    </subcellularLocation>
</comment>
<comment type="polymorphism">
    <text evidence="10">There are several alleles. The sequence shown is that of IMGT allele IGHV4-61*01.</text>
</comment>
<comment type="caution">
    <text evidence="10">For examples of full-length immunoglobulin heavy chains (of different isotypes) see AC P0DOX2, AC P0DOX3, AC P0DOX4, AC P0DOX5 and AC P0DOX6.</text>
</comment>
<feature type="signal peptide" evidence="2">
    <location>
        <begin position="1"/>
        <end position="19"/>
    </location>
</feature>
<feature type="chain" id="PRO_5007964481" description="Immunoglobulin heavy variable 4-61" evidence="2">
    <location>
        <begin position="20"/>
        <end position="118"/>
    </location>
</feature>
<feature type="domain" description="Ig-like" evidence="3">
    <location>
        <begin position="20"/>
        <end position="118" status="greater than"/>
    </location>
</feature>
<feature type="region of interest" description="Framework-1" evidence="1">
    <location>
        <begin position="20"/>
        <end position="44"/>
    </location>
</feature>
<feature type="region of interest" description="Complementarity-determining-1" evidence="1">
    <location>
        <begin position="45"/>
        <end position="54"/>
    </location>
</feature>
<feature type="region of interest" description="Framework-2" evidence="1">
    <location>
        <begin position="55"/>
        <end position="71"/>
    </location>
</feature>
<feature type="region of interest" description="Complementarity-determining-2" evidence="1">
    <location>
        <begin position="72"/>
        <end position="78"/>
    </location>
</feature>
<feature type="region of interest" description="Framework-3" evidence="1">
    <location>
        <begin position="79"/>
        <end position="116"/>
    </location>
</feature>
<feature type="region of interest" description="Complementarity-determining-3" evidence="1">
    <location>
        <begin position="117"/>
        <end position="118" status="greater than"/>
    </location>
</feature>
<feature type="disulfide bond" evidence="3">
    <location>
        <begin position="41"/>
        <end position="116"/>
    </location>
</feature>
<feature type="non-terminal residue">
    <location>
        <position position="118"/>
    </location>
</feature>
<feature type="strand" evidence="11">
    <location>
        <begin position="22"/>
        <end position="26"/>
    </location>
</feature>
<feature type="strand" evidence="11">
    <location>
        <begin position="36"/>
        <end position="46"/>
    </location>
</feature>
<feature type="strand" evidence="11">
    <location>
        <begin position="54"/>
        <end position="60"/>
    </location>
</feature>
<feature type="strand" evidence="11">
    <location>
        <begin position="67"/>
        <end position="72"/>
    </location>
</feature>
<feature type="strand" evidence="11">
    <location>
        <begin position="74"/>
        <end position="76"/>
    </location>
</feature>
<feature type="strand" evidence="11">
    <location>
        <begin position="78"/>
        <end position="80"/>
    </location>
</feature>
<feature type="turn" evidence="11">
    <location>
        <begin position="83"/>
        <end position="87"/>
    </location>
</feature>
<feature type="strand" evidence="11">
    <location>
        <begin position="88"/>
        <end position="93"/>
    </location>
</feature>
<feature type="turn" evidence="11">
    <location>
        <begin position="94"/>
        <end position="97"/>
    </location>
</feature>
<feature type="strand" evidence="11">
    <location>
        <begin position="98"/>
        <end position="105"/>
    </location>
</feature>
<feature type="helix" evidence="11">
    <location>
        <begin position="108"/>
        <end position="110"/>
    </location>
</feature>
<feature type="strand" evidence="11">
    <location>
        <begin position="112"/>
        <end position="118"/>
    </location>
</feature>
<proteinExistence type="evidence at protein level"/>
<protein>
    <recommendedName>
        <fullName evidence="4 9">Immunoglobulin heavy variable 4-61</fullName>
    </recommendedName>
</protein>
<sequence length="118" mass="13066">MKHLWFFLLLVAAPRWVLSQVQLQESGPGLVKPSETLSLTCTVSGGSVSSGSYYWSWIRQPPGKGLEWIGYIYYSGSTNYNPSLKSRVTISVDTSKNQFSLKLSSVTAADTAVYYCAR</sequence>
<evidence type="ECO:0000250" key="1">
    <source>
        <dbReference type="UniProtKB" id="P23083"/>
    </source>
</evidence>
<evidence type="ECO:0000255" key="2"/>
<evidence type="ECO:0000255" key="3">
    <source>
        <dbReference type="PROSITE-ProRule" id="PRU00114"/>
    </source>
</evidence>
<evidence type="ECO:0000303" key="4">
    <source>
    </source>
</evidence>
<evidence type="ECO:0000303" key="5">
    <source>
    </source>
</evidence>
<evidence type="ECO:0000303" key="6">
    <source>
    </source>
</evidence>
<evidence type="ECO:0000303" key="7">
    <source>
    </source>
</evidence>
<evidence type="ECO:0000303" key="8">
    <source>
    </source>
</evidence>
<evidence type="ECO:0000303" key="9">
    <source ref="3"/>
</evidence>
<evidence type="ECO:0000305" key="10"/>
<evidence type="ECO:0007829" key="11">
    <source>
        <dbReference type="PDB" id="7CZW"/>
    </source>
</evidence>
<gene>
    <name evidence="4 9" type="primary">IGHV4-61</name>
</gene>
<keyword id="KW-0002">3D-structure</keyword>
<keyword id="KW-1064">Adaptive immunity</keyword>
<keyword id="KW-1003">Cell membrane</keyword>
<keyword id="KW-1015">Disulfide bond</keyword>
<keyword id="KW-0391">Immunity</keyword>
<keyword id="KW-1280">Immunoglobulin</keyword>
<keyword id="KW-0393">Immunoglobulin domain</keyword>
<keyword id="KW-0472">Membrane</keyword>
<keyword id="KW-1267">Proteomics identification</keyword>
<keyword id="KW-1185">Reference proteome</keyword>
<keyword id="KW-0964">Secreted</keyword>
<keyword id="KW-0732">Signal</keyword>
<dbReference type="EMBL" id="AC245369">
    <property type="status" value="NOT_ANNOTATED_CDS"/>
    <property type="molecule type" value="Genomic_DNA"/>
</dbReference>
<dbReference type="PDB" id="7CZW">
    <property type="method" value="EM"/>
    <property type="resolution" value="2.80 A"/>
    <property type="chains" value="H/J=20-118"/>
</dbReference>
<dbReference type="PDB" id="7D03">
    <property type="method" value="EM"/>
    <property type="resolution" value="3.20 A"/>
    <property type="chains" value="H=20-118"/>
</dbReference>
<dbReference type="PDBsum" id="7CZW"/>
<dbReference type="PDBsum" id="7D03"/>
<dbReference type="SMR" id="A0A0C4DH41"/>
<dbReference type="FunCoup" id="A0A0C4DH41">
    <property type="interactions" value="337"/>
</dbReference>
<dbReference type="IMGT_GENE-DB" id="IGHV4-61"/>
<dbReference type="BioMuta" id="IGHV4-61"/>
<dbReference type="jPOST" id="A0A0C4DH41"/>
<dbReference type="MassIVE" id="A0A0C4DH41"/>
<dbReference type="Ensembl" id="ENST00000390630.3">
    <property type="protein sequence ID" value="ENSP00000375039.2"/>
    <property type="gene ID" value="ENSG00000211970.3"/>
</dbReference>
<dbReference type="Ensembl" id="ENST00000632960.1">
    <property type="protein sequence ID" value="ENSP00000487694.1"/>
    <property type="gene ID" value="ENSG00000282451.1"/>
</dbReference>
<dbReference type="AGR" id="HGNC:5655"/>
<dbReference type="GeneCards" id="IGHV4-61"/>
<dbReference type="HGNC" id="HGNC:5655">
    <property type="gene designation" value="IGHV4-61"/>
</dbReference>
<dbReference type="HPA" id="ENSG00000211970">
    <property type="expression patterns" value="Tissue enhanced (intestine, lymphoid tissue, stomach)"/>
</dbReference>
<dbReference type="neXtProt" id="NX_A0A0C4DH41"/>
<dbReference type="OpenTargets" id="ENSG00000211970"/>
<dbReference type="VEuPathDB" id="HostDB:ENSG00000211970"/>
<dbReference type="GeneTree" id="ENSGT01030000234536"/>
<dbReference type="HOGENOM" id="CLU_077975_5_0_1"/>
<dbReference type="InParanoid" id="A0A0C4DH41"/>
<dbReference type="OMA" id="GRIFNDG"/>
<dbReference type="OrthoDB" id="9536275at2759"/>
<dbReference type="PAN-GO" id="A0A0C4DH41">
    <property type="GO annotations" value="11 GO annotations based on evolutionary models"/>
</dbReference>
<dbReference type="PhylomeDB" id="A0A0C4DH41"/>
<dbReference type="ChiTaRS" id="IGHV4-61">
    <property type="organism name" value="human"/>
</dbReference>
<dbReference type="Pharos" id="A0A0C4DH41">
    <property type="development level" value="Tdark"/>
</dbReference>
<dbReference type="PRO" id="PR:A0A0C4DH41"/>
<dbReference type="Proteomes" id="UP000005640">
    <property type="component" value="Chromosome 14"/>
</dbReference>
<dbReference type="RNAct" id="A0A0C4DH41">
    <property type="molecule type" value="protein"/>
</dbReference>
<dbReference type="Bgee" id="ENSG00000211970">
    <property type="expression patterns" value="Expressed in duodenum and 91 other cell types or tissues"/>
</dbReference>
<dbReference type="GO" id="GO:0005576">
    <property type="term" value="C:extracellular region"/>
    <property type="evidence" value="ECO:0007669"/>
    <property type="project" value="UniProtKB-SubCell"/>
</dbReference>
<dbReference type="GO" id="GO:0019814">
    <property type="term" value="C:immunoglobulin complex"/>
    <property type="evidence" value="ECO:0007669"/>
    <property type="project" value="UniProtKB-KW"/>
</dbReference>
<dbReference type="GO" id="GO:0005886">
    <property type="term" value="C:plasma membrane"/>
    <property type="evidence" value="ECO:0007669"/>
    <property type="project" value="UniProtKB-SubCell"/>
</dbReference>
<dbReference type="GO" id="GO:0003823">
    <property type="term" value="F:antigen binding"/>
    <property type="evidence" value="ECO:0000318"/>
    <property type="project" value="GO_Central"/>
</dbReference>
<dbReference type="GO" id="GO:0016064">
    <property type="term" value="P:immunoglobulin mediated immune response"/>
    <property type="evidence" value="ECO:0000318"/>
    <property type="project" value="GO_Central"/>
</dbReference>
<dbReference type="FunFam" id="2.60.40.10:FF:001119">
    <property type="entry name" value="Immunoglobulin heavy variable 4-30-4"/>
    <property type="match status" value="1"/>
</dbReference>
<dbReference type="Gene3D" id="2.60.40.10">
    <property type="entry name" value="Immunoglobulins"/>
    <property type="match status" value="1"/>
</dbReference>
<dbReference type="InterPro" id="IPR007110">
    <property type="entry name" value="Ig-like_dom"/>
</dbReference>
<dbReference type="InterPro" id="IPR036179">
    <property type="entry name" value="Ig-like_dom_sf"/>
</dbReference>
<dbReference type="InterPro" id="IPR013783">
    <property type="entry name" value="Ig-like_fold"/>
</dbReference>
<dbReference type="InterPro" id="IPR013106">
    <property type="entry name" value="Ig_V-set"/>
</dbReference>
<dbReference type="InterPro" id="IPR050199">
    <property type="entry name" value="IgHV"/>
</dbReference>
<dbReference type="PANTHER" id="PTHR23266">
    <property type="entry name" value="IMMUNOGLOBULIN HEAVY CHAIN"/>
    <property type="match status" value="1"/>
</dbReference>
<dbReference type="Pfam" id="PF07686">
    <property type="entry name" value="V-set"/>
    <property type="match status" value="1"/>
</dbReference>
<dbReference type="SMART" id="SM00406">
    <property type="entry name" value="IGv"/>
    <property type="match status" value="1"/>
</dbReference>
<dbReference type="SUPFAM" id="SSF48726">
    <property type="entry name" value="Immunoglobulin"/>
    <property type="match status" value="1"/>
</dbReference>
<dbReference type="PROSITE" id="PS50835">
    <property type="entry name" value="IG_LIKE"/>
    <property type="match status" value="1"/>
</dbReference>
<reference key="1">
    <citation type="journal article" date="2003" name="Nature">
        <title>The DNA sequence and analysis of human chromosome 14.</title>
        <authorList>
            <person name="Heilig R."/>
            <person name="Eckenberg R."/>
            <person name="Petit J.-L."/>
            <person name="Fonknechten N."/>
            <person name="Da Silva C."/>
            <person name="Cattolico L."/>
            <person name="Levy M."/>
            <person name="Barbe V."/>
            <person name="De Berardinis V."/>
            <person name="Ureta-Vidal A."/>
            <person name="Pelletier E."/>
            <person name="Vico V."/>
            <person name="Anthouard V."/>
            <person name="Rowen L."/>
            <person name="Madan A."/>
            <person name="Qin S."/>
            <person name="Sun H."/>
            <person name="Du H."/>
            <person name="Pepin K."/>
            <person name="Artiguenave F."/>
            <person name="Robert C."/>
            <person name="Cruaud C."/>
            <person name="Bruels T."/>
            <person name="Jaillon O."/>
            <person name="Friedlander L."/>
            <person name="Samson G."/>
            <person name="Brottier P."/>
            <person name="Cure S."/>
            <person name="Segurens B."/>
            <person name="Aniere F."/>
            <person name="Samain S."/>
            <person name="Crespeau H."/>
            <person name="Abbasi N."/>
            <person name="Aiach N."/>
            <person name="Boscus D."/>
            <person name="Dickhoff R."/>
            <person name="Dors M."/>
            <person name="Dubois I."/>
            <person name="Friedman C."/>
            <person name="Gouyvenoux M."/>
            <person name="James R."/>
            <person name="Madan A."/>
            <person name="Mairey-Estrada B."/>
            <person name="Mangenot S."/>
            <person name="Martins N."/>
            <person name="Menard M."/>
            <person name="Oztas S."/>
            <person name="Ratcliffe A."/>
            <person name="Shaffer T."/>
            <person name="Trask B."/>
            <person name="Vacherie B."/>
            <person name="Bellemere C."/>
            <person name="Belser C."/>
            <person name="Besnard-Gonnet M."/>
            <person name="Bartol-Mavel D."/>
            <person name="Boutard M."/>
            <person name="Briez-Silla S."/>
            <person name="Combette S."/>
            <person name="Dufosse-Laurent V."/>
            <person name="Ferron C."/>
            <person name="Lechaplais C."/>
            <person name="Louesse C."/>
            <person name="Muselet D."/>
            <person name="Magdelenat G."/>
            <person name="Pateau E."/>
            <person name="Petit E."/>
            <person name="Sirvain-Trukniewicz P."/>
            <person name="Trybou A."/>
            <person name="Vega-Czarny N."/>
            <person name="Bataille E."/>
            <person name="Bluet E."/>
            <person name="Bordelais I."/>
            <person name="Dubois M."/>
            <person name="Dumont C."/>
            <person name="Guerin T."/>
            <person name="Haffray S."/>
            <person name="Hammadi R."/>
            <person name="Muanga J."/>
            <person name="Pellouin V."/>
            <person name="Robert D."/>
            <person name="Wunderle E."/>
            <person name="Gauguet G."/>
            <person name="Roy A."/>
            <person name="Sainte-Marthe L."/>
            <person name="Verdier J."/>
            <person name="Verdier-Discala C."/>
            <person name="Hillier L.W."/>
            <person name="Fulton L."/>
            <person name="McPherson J."/>
            <person name="Matsuda F."/>
            <person name="Wilson R."/>
            <person name="Scarpelli C."/>
            <person name="Gyapay G."/>
            <person name="Wincker P."/>
            <person name="Saurin W."/>
            <person name="Quetier F."/>
            <person name="Waterston R."/>
            <person name="Hood L."/>
            <person name="Weissenbach J."/>
        </authorList>
    </citation>
    <scope>NUCLEOTIDE SEQUENCE [LARGE SCALE GENOMIC DNA] (IMGT ALLELE IGHV4-61*01)</scope>
</reference>
<reference key="2">
    <citation type="journal article" date="2001" name="Exp. Clin. Immunogenet.">
        <title>Nomenclature of the human immunoglobulin heavy (IGH) genes.</title>
        <authorList>
            <person name="Lefranc M.P."/>
        </authorList>
    </citation>
    <scope>NOMENCLATURE</scope>
</reference>
<reference key="3">
    <citation type="book" date="2001" name="The Immunoglobulin FactsBook.">
        <title>The Immunoglobulin FactsBook.</title>
        <editorList>
            <person name="Lefranc M.P."/>
            <person name="Lefranc G."/>
        </editorList>
        <authorList>
            <person name="Lefranc M.P."/>
            <person name="Lefranc G."/>
        </authorList>
    </citation>
    <scope>NOMENCLATURE</scope>
</reference>
<reference key="4">
    <citation type="journal article" date="2007" name="Annu. Rev. Genet.">
        <title>Immunoglobulin somatic hypermutation.</title>
        <authorList>
            <person name="Teng G."/>
            <person name="Papavasiliou F.N."/>
        </authorList>
    </citation>
    <scope>REVIEW ON SOMATIC HYPERMUTATION</scope>
</reference>
<reference key="5">
    <citation type="journal article" date="2010" name="J. Allergy Clin. Immunol.">
        <title>Structure and function of immunoglobulins.</title>
        <authorList>
            <person name="Schroeder H.W. Jr."/>
            <person name="Cavacini L."/>
        </authorList>
    </citation>
    <scope>REVIEW ON IMMUNOGLOBULINS</scope>
</reference>
<reference key="6">
    <citation type="journal article" date="2012" name="Nat. Rev. Immunol.">
        <title>Molecular programming of B cell memory.</title>
        <authorList>
            <person name="McHeyzer-Williams M."/>
            <person name="Okitsu S."/>
            <person name="Wang N."/>
            <person name="McHeyzer-Williams L."/>
        </authorList>
    </citation>
    <scope>REVIEW ON FUNCTION</scope>
</reference>
<reference key="7">
    <citation type="journal article" date="2014" name="Front. Immunol.">
        <title>Immunoglobulin and T Cell Receptor Genes: IMGT((R)) and the Birth and Rise of Immunoinformatics.</title>
        <authorList>
            <person name="Lefranc M.P."/>
        </authorList>
    </citation>
    <scope>NOMENCLATURE</scope>
</reference>
<name>HV461_HUMAN</name>
<organism>
    <name type="scientific">Homo sapiens</name>
    <name type="common">Human</name>
    <dbReference type="NCBI Taxonomy" id="9606"/>
    <lineage>
        <taxon>Eukaryota</taxon>
        <taxon>Metazoa</taxon>
        <taxon>Chordata</taxon>
        <taxon>Craniata</taxon>
        <taxon>Vertebrata</taxon>
        <taxon>Euteleostomi</taxon>
        <taxon>Mammalia</taxon>
        <taxon>Eutheria</taxon>
        <taxon>Euarchontoglires</taxon>
        <taxon>Primates</taxon>
        <taxon>Haplorrhini</taxon>
        <taxon>Catarrhini</taxon>
        <taxon>Hominidae</taxon>
        <taxon>Homo</taxon>
    </lineage>
</organism>